<name>YBEY_PSYIN</name>
<organism>
    <name type="scientific">Psychromonas ingrahamii (strain DSM 17664 / CCUG 51855 / 37)</name>
    <dbReference type="NCBI Taxonomy" id="357804"/>
    <lineage>
        <taxon>Bacteria</taxon>
        <taxon>Pseudomonadati</taxon>
        <taxon>Pseudomonadota</taxon>
        <taxon>Gammaproteobacteria</taxon>
        <taxon>Alteromonadales</taxon>
        <taxon>Psychromonadaceae</taxon>
        <taxon>Psychromonas</taxon>
    </lineage>
</organism>
<comment type="function">
    <text evidence="1">Single strand-specific metallo-endoribonuclease involved in late-stage 70S ribosome quality control and in maturation of the 3' terminus of the 16S rRNA.</text>
</comment>
<comment type="cofactor">
    <cofactor evidence="1">
        <name>Zn(2+)</name>
        <dbReference type="ChEBI" id="CHEBI:29105"/>
    </cofactor>
    <text evidence="1">Binds 1 zinc ion.</text>
</comment>
<comment type="subcellular location">
    <subcellularLocation>
        <location evidence="1">Cytoplasm</location>
    </subcellularLocation>
</comment>
<comment type="similarity">
    <text evidence="1">Belongs to the endoribonuclease YbeY family.</text>
</comment>
<reference key="1">
    <citation type="journal article" date="2008" name="BMC Genomics">
        <title>Genomics of an extreme psychrophile, Psychromonas ingrahamii.</title>
        <authorList>
            <person name="Riley M."/>
            <person name="Staley J.T."/>
            <person name="Danchin A."/>
            <person name="Wang T.Z."/>
            <person name="Brettin T.S."/>
            <person name="Hauser L.J."/>
            <person name="Land M.L."/>
            <person name="Thompson L.S."/>
        </authorList>
    </citation>
    <scope>NUCLEOTIDE SEQUENCE [LARGE SCALE GENOMIC DNA]</scope>
    <source>
        <strain>DSM 17664 / CCUG 51855 / 37</strain>
    </source>
</reference>
<protein>
    <recommendedName>
        <fullName evidence="1">Endoribonuclease YbeY</fullName>
        <ecNumber evidence="1">3.1.-.-</ecNumber>
    </recommendedName>
</protein>
<dbReference type="EC" id="3.1.-.-" evidence="1"/>
<dbReference type="EMBL" id="CP000510">
    <property type="protein sequence ID" value="ABM02387.1"/>
    <property type="molecule type" value="Genomic_DNA"/>
</dbReference>
<dbReference type="RefSeq" id="WP_011768946.1">
    <property type="nucleotide sequence ID" value="NC_008709.1"/>
</dbReference>
<dbReference type="SMR" id="A1SSC2"/>
<dbReference type="STRING" id="357804.Ping_0533"/>
<dbReference type="KEGG" id="pin:Ping_0533"/>
<dbReference type="eggNOG" id="COG0319">
    <property type="taxonomic scope" value="Bacteria"/>
</dbReference>
<dbReference type="HOGENOM" id="CLU_106710_0_1_6"/>
<dbReference type="Proteomes" id="UP000000639">
    <property type="component" value="Chromosome"/>
</dbReference>
<dbReference type="GO" id="GO:0005737">
    <property type="term" value="C:cytoplasm"/>
    <property type="evidence" value="ECO:0007669"/>
    <property type="project" value="UniProtKB-SubCell"/>
</dbReference>
<dbReference type="GO" id="GO:0004222">
    <property type="term" value="F:metalloendopeptidase activity"/>
    <property type="evidence" value="ECO:0007669"/>
    <property type="project" value="InterPro"/>
</dbReference>
<dbReference type="GO" id="GO:0004521">
    <property type="term" value="F:RNA endonuclease activity"/>
    <property type="evidence" value="ECO:0007669"/>
    <property type="project" value="UniProtKB-UniRule"/>
</dbReference>
<dbReference type="GO" id="GO:0008270">
    <property type="term" value="F:zinc ion binding"/>
    <property type="evidence" value="ECO:0007669"/>
    <property type="project" value="UniProtKB-UniRule"/>
</dbReference>
<dbReference type="GO" id="GO:0006364">
    <property type="term" value="P:rRNA processing"/>
    <property type="evidence" value="ECO:0007669"/>
    <property type="project" value="UniProtKB-UniRule"/>
</dbReference>
<dbReference type="Gene3D" id="3.40.390.30">
    <property type="entry name" value="Metalloproteases ('zincins'), catalytic domain"/>
    <property type="match status" value="1"/>
</dbReference>
<dbReference type="HAMAP" id="MF_00009">
    <property type="entry name" value="Endoribonucl_YbeY"/>
    <property type="match status" value="1"/>
</dbReference>
<dbReference type="InterPro" id="IPR023091">
    <property type="entry name" value="MetalPrtase_cat_dom_sf_prd"/>
</dbReference>
<dbReference type="InterPro" id="IPR002036">
    <property type="entry name" value="YbeY"/>
</dbReference>
<dbReference type="InterPro" id="IPR020549">
    <property type="entry name" value="YbeY_CS"/>
</dbReference>
<dbReference type="NCBIfam" id="TIGR00043">
    <property type="entry name" value="rRNA maturation RNase YbeY"/>
    <property type="match status" value="1"/>
</dbReference>
<dbReference type="PANTHER" id="PTHR46986">
    <property type="entry name" value="ENDORIBONUCLEASE YBEY, CHLOROPLASTIC"/>
    <property type="match status" value="1"/>
</dbReference>
<dbReference type="PANTHER" id="PTHR46986:SF1">
    <property type="entry name" value="ENDORIBONUCLEASE YBEY, CHLOROPLASTIC"/>
    <property type="match status" value="1"/>
</dbReference>
<dbReference type="Pfam" id="PF02130">
    <property type="entry name" value="YbeY"/>
    <property type="match status" value="1"/>
</dbReference>
<dbReference type="SUPFAM" id="SSF55486">
    <property type="entry name" value="Metalloproteases ('zincins'), catalytic domain"/>
    <property type="match status" value="1"/>
</dbReference>
<dbReference type="PROSITE" id="PS01306">
    <property type="entry name" value="UPF0054"/>
    <property type="match status" value="1"/>
</dbReference>
<accession>A1SSC2</accession>
<gene>
    <name evidence="1" type="primary">ybeY</name>
    <name type="ordered locus">Ping_0533</name>
</gene>
<proteinExistence type="inferred from homology"/>
<keyword id="KW-0963">Cytoplasm</keyword>
<keyword id="KW-0255">Endonuclease</keyword>
<keyword id="KW-0378">Hydrolase</keyword>
<keyword id="KW-0479">Metal-binding</keyword>
<keyword id="KW-0540">Nuclease</keyword>
<keyword id="KW-1185">Reference proteome</keyword>
<keyword id="KW-0690">Ribosome biogenesis</keyword>
<keyword id="KW-0698">rRNA processing</keyword>
<keyword id="KW-0862">Zinc</keyword>
<sequence>MQLYVDLQIACSDPNDLPMPASFEKWIEAAILGGSESHREEAELTVRIVDQDEIMQLNHQYRNISKTTNVLAFPFQNPPGLTLPLLGDLIICKEVVESEAKLQGKSLTAHWAHMSIHSTLHLLGYDHIEQAEAVEMESLETKLLTELGFTDPYLSEKE</sequence>
<feature type="chain" id="PRO_0000284283" description="Endoribonuclease YbeY">
    <location>
        <begin position="1"/>
        <end position="158"/>
    </location>
</feature>
<feature type="binding site" evidence="1">
    <location>
        <position position="117"/>
    </location>
    <ligand>
        <name>Zn(2+)</name>
        <dbReference type="ChEBI" id="CHEBI:29105"/>
        <note>catalytic</note>
    </ligand>
</feature>
<feature type="binding site" evidence="1">
    <location>
        <position position="121"/>
    </location>
    <ligand>
        <name>Zn(2+)</name>
        <dbReference type="ChEBI" id="CHEBI:29105"/>
        <note>catalytic</note>
    </ligand>
</feature>
<feature type="binding site" evidence="1">
    <location>
        <position position="127"/>
    </location>
    <ligand>
        <name>Zn(2+)</name>
        <dbReference type="ChEBI" id="CHEBI:29105"/>
        <note>catalytic</note>
    </ligand>
</feature>
<evidence type="ECO:0000255" key="1">
    <source>
        <dbReference type="HAMAP-Rule" id="MF_00009"/>
    </source>
</evidence>